<sequence length="166" mass="18491">MVGSGISALGLLLLMQGSVDANGIQGFFYPWSCEGDVWDRESCGGQAAIENPNLCLRLRCCYRDGVCYHQRPDENMRRKHMWALGWTCGSLLFLITSICLFWWARRQDMLHLPRFLHRKCSKLSKTVSSLSKDRRSANKSTTVLQSPGGEVETAAAVSGEDTGGEE</sequence>
<keyword id="KW-1015">Disulfide bond</keyword>
<keyword id="KW-0472">Membrane</keyword>
<keyword id="KW-1185">Reference proteome</keyword>
<keyword id="KW-0732">Signal</keyword>
<keyword id="KW-0812">Transmembrane</keyword>
<keyword id="KW-1133">Transmembrane helix</keyword>
<gene>
    <name type="primary">Tmem190</name>
</gene>
<protein>
    <recommendedName>
        <fullName>Transmembrane protein 190</fullName>
    </recommendedName>
</protein>
<feature type="signal peptide" evidence="2">
    <location>
        <begin position="1"/>
        <end position="21"/>
    </location>
</feature>
<feature type="chain" id="PRO_0000312283" description="Transmembrane protein 190">
    <location>
        <begin position="22"/>
        <end position="166"/>
    </location>
</feature>
<feature type="topological domain" description="Extracellular" evidence="2">
    <location>
        <begin position="22"/>
        <end position="81"/>
    </location>
</feature>
<feature type="transmembrane region" description="Helical" evidence="2">
    <location>
        <begin position="82"/>
        <end position="102"/>
    </location>
</feature>
<feature type="topological domain" description="Cytoplasmic" evidence="2">
    <location>
        <begin position="103"/>
        <end position="166"/>
    </location>
</feature>
<feature type="domain" description="P-type">
    <location>
        <begin position="31"/>
        <end position="71"/>
    </location>
</feature>
<feature type="region of interest" description="Disordered" evidence="3">
    <location>
        <begin position="130"/>
        <end position="166"/>
    </location>
</feature>
<feature type="disulfide bond" evidence="1">
    <location>
        <begin position="33"/>
        <end position="61"/>
    </location>
</feature>
<feature type="disulfide bond" evidence="1">
    <location>
        <begin position="43"/>
        <end position="60"/>
    </location>
</feature>
<feature type="disulfide bond" evidence="1">
    <location>
        <begin position="55"/>
        <end position="67"/>
    </location>
</feature>
<name>TM190_MOUSE</name>
<proteinExistence type="evidence at protein level"/>
<dbReference type="EMBL" id="AK019807">
    <property type="protein sequence ID" value="BAB31858.1"/>
    <property type="molecule type" value="mRNA"/>
</dbReference>
<dbReference type="CCDS" id="CCDS51976.1"/>
<dbReference type="RefSeq" id="NP_084304.1">
    <property type="nucleotide sequence ID" value="NM_030028.1"/>
</dbReference>
<dbReference type="FunCoup" id="Q9D2E9">
    <property type="interactions" value="26"/>
</dbReference>
<dbReference type="STRING" id="10090.ENSMUSP00000013235"/>
<dbReference type="iPTMnet" id="Q9D2E9"/>
<dbReference type="PhosphoSitePlus" id="Q9D2E9"/>
<dbReference type="SwissPalm" id="Q9D2E9"/>
<dbReference type="PaxDb" id="10090-ENSMUSP00000013235"/>
<dbReference type="ProteomicsDB" id="259468"/>
<dbReference type="Antibodypedia" id="19561">
    <property type="antibodies" value="17 antibodies from 13 providers"/>
</dbReference>
<dbReference type="Ensembl" id="ENSMUST00000013235.6">
    <property type="protein sequence ID" value="ENSMUSP00000013235.5"/>
    <property type="gene ID" value="ENSMUSG00000013091.6"/>
</dbReference>
<dbReference type="GeneID" id="78052"/>
<dbReference type="KEGG" id="mmu:78052"/>
<dbReference type="UCSC" id="uc009eyp.2">
    <property type="organism name" value="mouse"/>
</dbReference>
<dbReference type="AGR" id="MGI:1925302"/>
<dbReference type="CTD" id="147744"/>
<dbReference type="MGI" id="MGI:1925302">
    <property type="gene designation" value="Tmem190"/>
</dbReference>
<dbReference type="VEuPathDB" id="HostDB:ENSMUSG00000013091"/>
<dbReference type="eggNOG" id="ENOG502T0Q7">
    <property type="taxonomic scope" value="Eukaryota"/>
</dbReference>
<dbReference type="GeneTree" id="ENSGT00390000006710"/>
<dbReference type="HOGENOM" id="CLU_130475_0_0_1"/>
<dbReference type="InParanoid" id="Q9D2E9"/>
<dbReference type="OMA" id="SSICLFW"/>
<dbReference type="OrthoDB" id="9529881at2759"/>
<dbReference type="PhylomeDB" id="Q9D2E9"/>
<dbReference type="TreeFam" id="TF337652"/>
<dbReference type="BioGRID-ORCS" id="78052">
    <property type="hits" value="1 hit in 77 CRISPR screens"/>
</dbReference>
<dbReference type="PRO" id="PR:Q9D2E9"/>
<dbReference type="Proteomes" id="UP000000589">
    <property type="component" value="Chromosome 7"/>
</dbReference>
<dbReference type="RNAct" id="Q9D2E9">
    <property type="molecule type" value="protein"/>
</dbReference>
<dbReference type="Bgee" id="ENSMUSG00000013091">
    <property type="expression patterns" value="Expressed in spermatid and 44 other cell types or tissues"/>
</dbReference>
<dbReference type="GO" id="GO:0002079">
    <property type="term" value="C:inner acrosomal membrane"/>
    <property type="evidence" value="ECO:0000314"/>
    <property type="project" value="MGI"/>
</dbReference>
<dbReference type="GO" id="GO:0042802">
    <property type="term" value="F:identical protein binding"/>
    <property type="evidence" value="ECO:0000314"/>
    <property type="project" value="MGI"/>
</dbReference>
<dbReference type="GO" id="GO:0002244">
    <property type="term" value="P:hematopoietic progenitor cell differentiation"/>
    <property type="evidence" value="ECO:0000315"/>
    <property type="project" value="MGI"/>
</dbReference>
<dbReference type="InterPro" id="IPR044913">
    <property type="entry name" value="P_trefoil_dom_sf"/>
</dbReference>
<dbReference type="InterPro" id="IPR028248">
    <property type="entry name" value="TMEM190"/>
</dbReference>
<dbReference type="PANTHER" id="PTHR37868">
    <property type="entry name" value="TRANSMEMBRANE PROTEIN 190"/>
    <property type="match status" value="1"/>
</dbReference>
<dbReference type="PANTHER" id="PTHR37868:SF1">
    <property type="entry name" value="TRANSMEMBRANE PROTEIN 190"/>
    <property type="match status" value="1"/>
</dbReference>
<dbReference type="Pfam" id="PF15431">
    <property type="entry name" value="TMEM190"/>
    <property type="match status" value="1"/>
</dbReference>
<dbReference type="SUPFAM" id="SSF57492">
    <property type="entry name" value="Trefoil"/>
    <property type="match status" value="1"/>
</dbReference>
<organism>
    <name type="scientific">Mus musculus</name>
    <name type="common">Mouse</name>
    <dbReference type="NCBI Taxonomy" id="10090"/>
    <lineage>
        <taxon>Eukaryota</taxon>
        <taxon>Metazoa</taxon>
        <taxon>Chordata</taxon>
        <taxon>Craniata</taxon>
        <taxon>Vertebrata</taxon>
        <taxon>Euteleostomi</taxon>
        <taxon>Mammalia</taxon>
        <taxon>Eutheria</taxon>
        <taxon>Euarchontoglires</taxon>
        <taxon>Glires</taxon>
        <taxon>Rodentia</taxon>
        <taxon>Myomorpha</taxon>
        <taxon>Muroidea</taxon>
        <taxon>Muridae</taxon>
        <taxon>Murinae</taxon>
        <taxon>Mus</taxon>
        <taxon>Mus</taxon>
    </lineage>
</organism>
<evidence type="ECO:0000250" key="1"/>
<evidence type="ECO:0000255" key="2"/>
<evidence type="ECO:0000256" key="3">
    <source>
        <dbReference type="SAM" id="MobiDB-lite"/>
    </source>
</evidence>
<evidence type="ECO:0000269" key="4">
    <source>
    </source>
</evidence>
<accession>Q9D2E9</accession>
<comment type="subcellular location">
    <subcellularLocation>
        <location evidence="4">Membrane</location>
        <topology evidence="4">Single-pass type I membrane protein</topology>
    </subcellularLocation>
    <text>Localizes in the intracellular space in testicular germ cells and sperm. Detected also on the cell surface in post-meiotic round spermatids. In cauda epididymal sperm relocates during the acrosome reaction from the inner-acrosomal membrane onto the equatorial segment surface, on which sperm-oocyte fusion occurs. Colocalizes with IZUMO1 at the inner-acrosomal membrane.</text>
</comment>
<comment type="tissue specificity">
    <text evidence="4">Detected in testis and in a mixture of spermatogenic cells at various stages (testicular germ cells). Not detected in heart, brain, spleen, lung, liver, skeletal muscle and kidney.</text>
</comment>
<comment type="disruption phenotype">
    <text evidence="4">Mice are normal with no alterations in fertility, body size and behavior.</text>
</comment>
<reference key="1">
    <citation type="journal article" date="2005" name="Science">
        <title>The transcriptional landscape of the mammalian genome.</title>
        <authorList>
            <person name="Carninci P."/>
            <person name="Kasukawa T."/>
            <person name="Katayama S."/>
            <person name="Gough J."/>
            <person name="Frith M.C."/>
            <person name="Maeda N."/>
            <person name="Oyama R."/>
            <person name="Ravasi T."/>
            <person name="Lenhard B."/>
            <person name="Wells C."/>
            <person name="Kodzius R."/>
            <person name="Shimokawa K."/>
            <person name="Bajic V.B."/>
            <person name="Brenner S.E."/>
            <person name="Batalov S."/>
            <person name="Forrest A.R."/>
            <person name="Zavolan M."/>
            <person name="Davis M.J."/>
            <person name="Wilming L.G."/>
            <person name="Aidinis V."/>
            <person name="Allen J.E."/>
            <person name="Ambesi-Impiombato A."/>
            <person name="Apweiler R."/>
            <person name="Aturaliya R.N."/>
            <person name="Bailey T.L."/>
            <person name="Bansal M."/>
            <person name="Baxter L."/>
            <person name="Beisel K.W."/>
            <person name="Bersano T."/>
            <person name="Bono H."/>
            <person name="Chalk A.M."/>
            <person name="Chiu K.P."/>
            <person name="Choudhary V."/>
            <person name="Christoffels A."/>
            <person name="Clutterbuck D.R."/>
            <person name="Crowe M.L."/>
            <person name="Dalla E."/>
            <person name="Dalrymple B.P."/>
            <person name="de Bono B."/>
            <person name="Della Gatta G."/>
            <person name="di Bernardo D."/>
            <person name="Down T."/>
            <person name="Engstrom P."/>
            <person name="Fagiolini M."/>
            <person name="Faulkner G."/>
            <person name="Fletcher C.F."/>
            <person name="Fukushima T."/>
            <person name="Furuno M."/>
            <person name="Futaki S."/>
            <person name="Gariboldi M."/>
            <person name="Georgii-Hemming P."/>
            <person name="Gingeras T.R."/>
            <person name="Gojobori T."/>
            <person name="Green R.E."/>
            <person name="Gustincich S."/>
            <person name="Harbers M."/>
            <person name="Hayashi Y."/>
            <person name="Hensch T.K."/>
            <person name="Hirokawa N."/>
            <person name="Hill D."/>
            <person name="Huminiecki L."/>
            <person name="Iacono M."/>
            <person name="Ikeo K."/>
            <person name="Iwama A."/>
            <person name="Ishikawa T."/>
            <person name="Jakt M."/>
            <person name="Kanapin A."/>
            <person name="Katoh M."/>
            <person name="Kawasawa Y."/>
            <person name="Kelso J."/>
            <person name="Kitamura H."/>
            <person name="Kitano H."/>
            <person name="Kollias G."/>
            <person name="Krishnan S.P."/>
            <person name="Kruger A."/>
            <person name="Kummerfeld S.K."/>
            <person name="Kurochkin I.V."/>
            <person name="Lareau L.F."/>
            <person name="Lazarevic D."/>
            <person name="Lipovich L."/>
            <person name="Liu J."/>
            <person name="Liuni S."/>
            <person name="McWilliam S."/>
            <person name="Madan Babu M."/>
            <person name="Madera M."/>
            <person name="Marchionni L."/>
            <person name="Matsuda H."/>
            <person name="Matsuzawa S."/>
            <person name="Miki H."/>
            <person name="Mignone F."/>
            <person name="Miyake S."/>
            <person name="Morris K."/>
            <person name="Mottagui-Tabar S."/>
            <person name="Mulder N."/>
            <person name="Nakano N."/>
            <person name="Nakauchi H."/>
            <person name="Ng P."/>
            <person name="Nilsson R."/>
            <person name="Nishiguchi S."/>
            <person name="Nishikawa S."/>
            <person name="Nori F."/>
            <person name="Ohara O."/>
            <person name="Okazaki Y."/>
            <person name="Orlando V."/>
            <person name="Pang K.C."/>
            <person name="Pavan W.J."/>
            <person name="Pavesi G."/>
            <person name="Pesole G."/>
            <person name="Petrovsky N."/>
            <person name="Piazza S."/>
            <person name="Reed J."/>
            <person name="Reid J.F."/>
            <person name="Ring B.Z."/>
            <person name="Ringwald M."/>
            <person name="Rost B."/>
            <person name="Ruan Y."/>
            <person name="Salzberg S.L."/>
            <person name="Sandelin A."/>
            <person name="Schneider C."/>
            <person name="Schoenbach C."/>
            <person name="Sekiguchi K."/>
            <person name="Semple C.A."/>
            <person name="Seno S."/>
            <person name="Sessa L."/>
            <person name="Sheng Y."/>
            <person name="Shibata Y."/>
            <person name="Shimada H."/>
            <person name="Shimada K."/>
            <person name="Silva D."/>
            <person name="Sinclair B."/>
            <person name="Sperling S."/>
            <person name="Stupka E."/>
            <person name="Sugiura K."/>
            <person name="Sultana R."/>
            <person name="Takenaka Y."/>
            <person name="Taki K."/>
            <person name="Tammoja K."/>
            <person name="Tan S.L."/>
            <person name="Tang S."/>
            <person name="Taylor M.S."/>
            <person name="Tegner J."/>
            <person name="Teichmann S.A."/>
            <person name="Ueda H.R."/>
            <person name="van Nimwegen E."/>
            <person name="Verardo R."/>
            <person name="Wei C.L."/>
            <person name="Yagi K."/>
            <person name="Yamanishi H."/>
            <person name="Zabarovsky E."/>
            <person name="Zhu S."/>
            <person name="Zimmer A."/>
            <person name="Hide W."/>
            <person name="Bult C."/>
            <person name="Grimmond S.M."/>
            <person name="Teasdale R.D."/>
            <person name="Liu E.T."/>
            <person name="Brusic V."/>
            <person name="Quackenbush J."/>
            <person name="Wahlestedt C."/>
            <person name="Mattick J.S."/>
            <person name="Hume D.A."/>
            <person name="Kai C."/>
            <person name="Sasaki D."/>
            <person name="Tomaru Y."/>
            <person name="Fukuda S."/>
            <person name="Kanamori-Katayama M."/>
            <person name="Suzuki M."/>
            <person name="Aoki J."/>
            <person name="Arakawa T."/>
            <person name="Iida J."/>
            <person name="Imamura K."/>
            <person name="Itoh M."/>
            <person name="Kato T."/>
            <person name="Kawaji H."/>
            <person name="Kawagashira N."/>
            <person name="Kawashima T."/>
            <person name="Kojima M."/>
            <person name="Kondo S."/>
            <person name="Konno H."/>
            <person name="Nakano K."/>
            <person name="Ninomiya N."/>
            <person name="Nishio T."/>
            <person name="Okada M."/>
            <person name="Plessy C."/>
            <person name="Shibata K."/>
            <person name="Shiraki T."/>
            <person name="Suzuki S."/>
            <person name="Tagami M."/>
            <person name="Waki K."/>
            <person name="Watahiki A."/>
            <person name="Okamura-Oho Y."/>
            <person name="Suzuki H."/>
            <person name="Kawai J."/>
            <person name="Hayashizaki Y."/>
        </authorList>
    </citation>
    <scope>NUCLEOTIDE SEQUENCE [LARGE SCALE MRNA]</scope>
    <source>
        <strain>C57BL/6J</strain>
        <tissue>Testis</tissue>
    </source>
</reference>
<reference key="2">
    <citation type="journal article" date="2010" name="Cell">
        <title>A tissue-specific atlas of mouse protein phosphorylation and expression.</title>
        <authorList>
            <person name="Huttlin E.L."/>
            <person name="Jedrychowski M.P."/>
            <person name="Elias J.E."/>
            <person name="Goswami T."/>
            <person name="Rad R."/>
            <person name="Beausoleil S.A."/>
            <person name="Villen J."/>
            <person name="Haas W."/>
            <person name="Sowa M.E."/>
            <person name="Gygi S.P."/>
        </authorList>
    </citation>
    <scope>IDENTIFICATION BY MASS SPECTROMETRY [LARGE SCALE ANALYSIS]</scope>
    <source>
        <tissue>Testis</tissue>
    </source>
</reference>
<reference key="3">
    <citation type="journal article" date="2011" name="Reproduction">
        <title>Characterization of mouse sperm TMEM190, a small transmembrane protein with the trefoil domain: evidence for co-localization with IZUMO1 and complex formation with other sperm proteins.</title>
        <authorList>
            <person name="Nishimura H."/>
            <person name="Gupta S."/>
            <person name="Myles D."/>
            <person name="Primakoff P."/>
        </authorList>
    </citation>
    <scope>SUBCELLULAR LOCATION</scope>
    <scope>TISSUE SPECIFICITY</scope>
    <scope>DISRUPTION PHENOTYPE</scope>
</reference>